<protein>
    <recommendedName>
        <fullName evidence="1">Formate-dependent phosphoribosylglycinamide formyltransferase</fullName>
        <ecNumber evidence="1">6.3.1.21</ecNumber>
    </recommendedName>
    <alternativeName>
        <fullName evidence="1">5'-phosphoribosylglycinamide transformylase 2</fullName>
    </alternativeName>
    <alternativeName>
        <fullName evidence="1">Formate-dependent GAR transformylase</fullName>
    </alternativeName>
    <alternativeName>
        <fullName evidence="1">GAR transformylase 2</fullName>
        <shortName evidence="1">GART 2</shortName>
    </alternativeName>
    <alternativeName>
        <fullName evidence="1">Non-folate glycinamide ribonucleotide transformylase</fullName>
    </alternativeName>
    <alternativeName>
        <fullName evidence="1">Phosphoribosylglycinamide formyltransferase 2</fullName>
    </alternativeName>
</protein>
<keyword id="KW-0067">ATP-binding</keyword>
<keyword id="KW-0436">Ligase</keyword>
<keyword id="KW-0460">Magnesium</keyword>
<keyword id="KW-0479">Metal-binding</keyword>
<keyword id="KW-0547">Nucleotide-binding</keyword>
<keyword id="KW-0658">Purine biosynthesis</keyword>
<keyword id="KW-1185">Reference proteome</keyword>
<evidence type="ECO:0000255" key="1">
    <source>
        <dbReference type="HAMAP-Rule" id="MF_01643"/>
    </source>
</evidence>
<proteinExistence type="inferred from homology"/>
<organism>
    <name type="scientific">Prochlorococcus marinus (strain MIT 9301)</name>
    <dbReference type="NCBI Taxonomy" id="167546"/>
    <lineage>
        <taxon>Bacteria</taxon>
        <taxon>Bacillati</taxon>
        <taxon>Cyanobacteriota</taxon>
        <taxon>Cyanophyceae</taxon>
        <taxon>Synechococcales</taxon>
        <taxon>Prochlorococcaceae</taxon>
        <taxon>Prochlorococcus</taxon>
    </lineage>
</organism>
<sequence length="391" mass="44266">MKESIFSKKRILLLGSGELGKELVIESKRLGLEVIAIDRYEKAPAMQVADYSRVIDMGDKNILKNVIKEFNPDYVVPEIEALSIEALKELEDEGFNIVPNARTVEITMNRDKIRDLASKDLKIKTAKFDYIFEFDDLEKKADEIGFPLLLKPLMSSSGKGQSLVETKNDLQNAWKQAQANSRGKVKGVIIEEFINFDFEFTLLTVRKENGENIFCLPIGHLQSNGDYQCSWQPLEIKDSLIIEAKRMTSRILNNLNGAGLYGVEFFIKGSEVIFSELSPRPHDTGMVTLVSQNINEFELHLRAFLDLPIPHIYLIEPSATRVILSNQEYLNPIYEGLNEALEFEKTKVLIFGKPVSRKGRRMGVVLSSNSDIYLARKNADEAARKIKVSTT</sequence>
<feature type="chain" id="PRO_0000319200" description="Formate-dependent phosphoribosylglycinamide formyltransferase">
    <location>
        <begin position="1"/>
        <end position="391"/>
    </location>
</feature>
<feature type="domain" description="ATP-grasp" evidence="1">
    <location>
        <begin position="115"/>
        <end position="305"/>
    </location>
</feature>
<feature type="binding site" evidence="1">
    <location>
        <begin position="18"/>
        <end position="19"/>
    </location>
    <ligand>
        <name>N(1)-(5-phospho-beta-D-ribosyl)glycinamide</name>
        <dbReference type="ChEBI" id="CHEBI:143788"/>
    </ligand>
</feature>
<feature type="binding site" evidence="1">
    <location>
        <position position="78"/>
    </location>
    <ligand>
        <name>N(1)-(5-phospho-beta-D-ribosyl)glycinamide</name>
        <dbReference type="ChEBI" id="CHEBI:143788"/>
    </ligand>
</feature>
<feature type="binding site" evidence="1">
    <location>
        <position position="110"/>
    </location>
    <ligand>
        <name>ATP</name>
        <dbReference type="ChEBI" id="CHEBI:30616"/>
    </ligand>
</feature>
<feature type="binding site" evidence="1">
    <location>
        <position position="151"/>
    </location>
    <ligand>
        <name>ATP</name>
        <dbReference type="ChEBI" id="CHEBI:30616"/>
    </ligand>
</feature>
<feature type="binding site" evidence="1">
    <location>
        <begin position="156"/>
        <end position="161"/>
    </location>
    <ligand>
        <name>ATP</name>
        <dbReference type="ChEBI" id="CHEBI:30616"/>
    </ligand>
</feature>
<feature type="binding site" evidence="1">
    <location>
        <begin position="191"/>
        <end position="194"/>
    </location>
    <ligand>
        <name>ATP</name>
        <dbReference type="ChEBI" id="CHEBI:30616"/>
    </ligand>
</feature>
<feature type="binding site" evidence="1">
    <location>
        <position position="199"/>
    </location>
    <ligand>
        <name>ATP</name>
        <dbReference type="ChEBI" id="CHEBI:30616"/>
    </ligand>
</feature>
<feature type="binding site" evidence="1">
    <location>
        <position position="264"/>
    </location>
    <ligand>
        <name>Mg(2+)</name>
        <dbReference type="ChEBI" id="CHEBI:18420"/>
    </ligand>
</feature>
<feature type="binding site" evidence="1">
    <location>
        <position position="276"/>
    </location>
    <ligand>
        <name>Mg(2+)</name>
        <dbReference type="ChEBI" id="CHEBI:18420"/>
    </ligand>
</feature>
<feature type="binding site" evidence="1">
    <location>
        <position position="283"/>
    </location>
    <ligand>
        <name>N(1)-(5-phospho-beta-D-ribosyl)glycinamide</name>
        <dbReference type="ChEBI" id="CHEBI:143788"/>
    </ligand>
</feature>
<feature type="binding site" evidence="1">
    <location>
        <position position="353"/>
    </location>
    <ligand>
        <name>N(1)-(5-phospho-beta-D-ribosyl)glycinamide</name>
        <dbReference type="ChEBI" id="CHEBI:143788"/>
    </ligand>
</feature>
<feature type="binding site" evidence="1">
    <location>
        <begin position="360"/>
        <end position="361"/>
    </location>
    <ligand>
        <name>N(1)-(5-phospho-beta-D-ribosyl)glycinamide</name>
        <dbReference type="ChEBI" id="CHEBI:143788"/>
    </ligand>
</feature>
<accession>A3PD91</accession>
<reference key="1">
    <citation type="journal article" date="2007" name="PLoS Genet.">
        <title>Patterns and implications of gene gain and loss in the evolution of Prochlorococcus.</title>
        <authorList>
            <person name="Kettler G.C."/>
            <person name="Martiny A.C."/>
            <person name="Huang K."/>
            <person name="Zucker J."/>
            <person name="Coleman M.L."/>
            <person name="Rodrigue S."/>
            <person name="Chen F."/>
            <person name="Lapidus A."/>
            <person name="Ferriera S."/>
            <person name="Johnson J."/>
            <person name="Steglich C."/>
            <person name="Church G.M."/>
            <person name="Richardson P."/>
            <person name="Chisholm S.W."/>
        </authorList>
    </citation>
    <scope>NUCLEOTIDE SEQUENCE [LARGE SCALE GENOMIC DNA]</scope>
    <source>
        <strain>MIT 9301</strain>
    </source>
</reference>
<name>PURT_PROM0</name>
<comment type="function">
    <text evidence="1">Involved in the de novo purine biosynthesis. Catalyzes the transfer of formate to 5-phospho-ribosyl-glycinamide (GAR), producing 5-phospho-ribosyl-N-formylglycinamide (FGAR). Formate is provided by PurU via hydrolysis of 10-formyl-tetrahydrofolate.</text>
</comment>
<comment type="catalytic activity">
    <reaction evidence="1">
        <text>N(1)-(5-phospho-beta-D-ribosyl)glycinamide + formate + ATP = N(2)-formyl-N(1)-(5-phospho-beta-D-ribosyl)glycinamide + ADP + phosphate + H(+)</text>
        <dbReference type="Rhea" id="RHEA:24829"/>
        <dbReference type="ChEBI" id="CHEBI:15378"/>
        <dbReference type="ChEBI" id="CHEBI:15740"/>
        <dbReference type="ChEBI" id="CHEBI:30616"/>
        <dbReference type="ChEBI" id="CHEBI:43474"/>
        <dbReference type="ChEBI" id="CHEBI:143788"/>
        <dbReference type="ChEBI" id="CHEBI:147286"/>
        <dbReference type="ChEBI" id="CHEBI:456216"/>
        <dbReference type="EC" id="6.3.1.21"/>
    </reaction>
    <physiologicalReaction direction="left-to-right" evidence="1">
        <dbReference type="Rhea" id="RHEA:24830"/>
    </physiologicalReaction>
</comment>
<comment type="pathway">
    <text evidence="1">Purine metabolism; IMP biosynthesis via de novo pathway; N(2)-formyl-N(1)-(5-phospho-D-ribosyl)glycinamide from N(1)-(5-phospho-D-ribosyl)glycinamide (formate route): step 1/1.</text>
</comment>
<comment type="subunit">
    <text evidence="1">Homodimer.</text>
</comment>
<comment type="similarity">
    <text evidence="1">Belongs to the PurK/PurT family.</text>
</comment>
<dbReference type="EC" id="6.3.1.21" evidence="1"/>
<dbReference type="EMBL" id="CP000576">
    <property type="protein sequence ID" value="ABO17716.1"/>
    <property type="molecule type" value="Genomic_DNA"/>
</dbReference>
<dbReference type="RefSeq" id="WP_011863055.1">
    <property type="nucleotide sequence ID" value="NC_009091.1"/>
</dbReference>
<dbReference type="SMR" id="A3PD91"/>
<dbReference type="STRING" id="167546.P9301_10931"/>
<dbReference type="KEGG" id="pmg:P9301_10931"/>
<dbReference type="eggNOG" id="COG0027">
    <property type="taxonomic scope" value="Bacteria"/>
</dbReference>
<dbReference type="HOGENOM" id="CLU_011534_1_3_3"/>
<dbReference type="OrthoDB" id="9804625at2"/>
<dbReference type="UniPathway" id="UPA00074">
    <property type="reaction ID" value="UER00127"/>
</dbReference>
<dbReference type="Proteomes" id="UP000001430">
    <property type="component" value="Chromosome"/>
</dbReference>
<dbReference type="GO" id="GO:0005829">
    <property type="term" value="C:cytosol"/>
    <property type="evidence" value="ECO:0007669"/>
    <property type="project" value="TreeGrafter"/>
</dbReference>
<dbReference type="GO" id="GO:0005524">
    <property type="term" value="F:ATP binding"/>
    <property type="evidence" value="ECO:0007669"/>
    <property type="project" value="UniProtKB-UniRule"/>
</dbReference>
<dbReference type="GO" id="GO:0000287">
    <property type="term" value="F:magnesium ion binding"/>
    <property type="evidence" value="ECO:0007669"/>
    <property type="project" value="InterPro"/>
</dbReference>
<dbReference type="GO" id="GO:0043815">
    <property type="term" value="F:phosphoribosylglycinamide formyltransferase 2 activity"/>
    <property type="evidence" value="ECO:0007669"/>
    <property type="project" value="UniProtKB-UniRule"/>
</dbReference>
<dbReference type="GO" id="GO:0004644">
    <property type="term" value="F:phosphoribosylglycinamide formyltransferase activity"/>
    <property type="evidence" value="ECO:0007669"/>
    <property type="project" value="InterPro"/>
</dbReference>
<dbReference type="GO" id="GO:0006189">
    <property type="term" value="P:'de novo' IMP biosynthetic process"/>
    <property type="evidence" value="ECO:0007669"/>
    <property type="project" value="UniProtKB-UniRule"/>
</dbReference>
<dbReference type="Gene3D" id="3.40.50.20">
    <property type="match status" value="1"/>
</dbReference>
<dbReference type="Gene3D" id="3.30.1490.20">
    <property type="entry name" value="ATP-grasp fold, A domain"/>
    <property type="match status" value="1"/>
</dbReference>
<dbReference type="Gene3D" id="3.30.470.20">
    <property type="entry name" value="ATP-grasp fold, B domain"/>
    <property type="match status" value="1"/>
</dbReference>
<dbReference type="HAMAP" id="MF_01643">
    <property type="entry name" value="PurT"/>
    <property type="match status" value="1"/>
</dbReference>
<dbReference type="InterPro" id="IPR011761">
    <property type="entry name" value="ATP-grasp"/>
</dbReference>
<dbReference type="InterPro" id="IPR003135">
    <property type="entry name" value="ATP-grasp_carboxylate-amine"/>
</dbReference>
<dbReference type="InterPro" id="IPR013815">
    <property type="entry name" value="ATP_grasp_subdomain_1"/>
</dbReference>
<dbReference type="InterPro" id="IPR016185">
    <property type="entry name" value="PreATP-grasp_dom_sf"/>
</dbReference>
<dbReference type="InterPro" id="IPR005862">
    <property type="entry name" value="PurT"/>
</dbReference>
<dbReference type="InterPro" id="IPR054350">
    <property type="entry name" value="PurT/PurK_preATP-grasp"/>
</dbReference>
<dbReference type="InterPro" id="IPR048740">
    <property type="entry name" value="PurT_C"/>
</dbReference>
<dbReference type="InterPro" id="IPR011054">
    <property type="entry name" value="Rudment_hybrid_motif"/>
</dbReference>
<dbReference type="NCBIfam" id="NF006766">
    <property type="entry name" value="PRK09288.1"/>
    <property type="match status" value="1"/>
</dbReference>
<dbReference type="NCBIfam" id="TIGR01142">
    <property type="entry name" value="purT"/>
    <property type="match status" value="1"/>
</dbReference>
<dbReference type="PANTHER" id="PTHR43055">
    <property type="entry name" value="FORMATE-DEPENDENT PHOSPHORIBOSYLGLYCINAMIDE FORMYLTRANSFERASE"/>
    <property type="match status" value="1"/>
</dbReference>
<dbReference type="PANTHER" id="PTHR43055:SF1">
    <property type="entry name" value="FORMATE-DEPENDENT PHOSPHORIBOSYLGLYCINAMIDE FORMYLTRANSFERASE"/>
    <property type="match status" value="1"/>
</dbReference>
<dbReference type="Pfam" id="PF02222">
    <property type="entry name" value="ATP-grasp"/>
    <property type="match status" value="1"/>
</dbReference>
<dbReference type="Pfam" id="PF21244">
    <property type="entry name" value="PurT_C"/>
    <property type="match status" value="1"/>
</dbReference>
<dbReference type="Pfam" id="PF22660">
    <property type="entry name" value="RS_preATP-grasp-like"/>
    <property type="match status" value="1"/>
</dbReference>
<dbReference type="SUPFAM" id="SSF56059">
    <property type="entry name" value="Glutathione synthetase ATP-binding domain-like"/>
    <property type="match status" value="1"/>
</dbReference>
<dbReference type="SUPFAM" id="SSF52440">
    <property type="entry name" value="PreATP-grasp domain"/>
    <property type="match status" value="1"/>
</dbReference>
<dbReference type="SUPFAM" id="SSF51246">
    <property type="entry name" value="Rudiment single hybrid motif"/>
    <property type="match status" value="1"/>
</dbReference>
<dbReference type="PROSITE" id="PS50975">
    <property type="entry name" value="ATP_GRASP"/>
    <property type="match status" value="1"/>
</dbReference>
<gene>
    <name evidence="1" type="primary">purT</name>
    <name type="ordered locus">P9301_10931</name>
</gene>